<accession>Q47WG3</accession>
<comment type="function">
    <text evidence="1">Catalyzes the oxidation of 3-carboxy-2-hydroxy-4-methylpentanoate (3-isopropylmalate) to 3-carboxy-4-methyl-2-oxopentanoate. The product decarboxylates to 4-methyl-2 oxopentanoate.</text>
</comment>
<comment type="catalytic activity">
    <reaction evidence="1">
        <text>(2R,3S)-3-isopropylmalate + NAD(+) = 4-methyl-2-oxopentanoate + CO2 + NADH</text>
        <dbReference type="Rhea" id="RHEA:32271"/>
        <dbReference type="ChEBI" id="CHEBI:16526"/>
        <dbReference type="ChEBI" id="CHEBI:17865"/>
        <dbReference type="ChEBI" id="CHEBI:35121"/>
        <dbReference type="ChEBI" id="CHEBI:57540"/>
        <dbReference type="ChEBI" id="CHEBI:57945"/>
        <dbReference type="EC" id="1.1.1.85"/>
    </reaction>
</comment>
<comment type="cofactor">
    <cofactor evidence="1">
        <name>Mg(2+)</name>
        <dbReference type="ChEBI" id="CHEBI:18420"/>
    </cofactor>
    <cofactor evidence="1">
        <name>Mn(2+)</name>
        <dbReference type="ChEBI" id="CHEBI:29035"/>
    </cofactor>
    <text evidence="1">Binds 1 Mg(2+) or Mn(2+) ion per subunit.</text>
</comment>
<comment type="pathway">
    <text evidence="1">Amino-acid biosynthesis; L-leucine biosynthesis; L-leucine from 3-methyl-2-oxobutanoate: step 3/4.</text>
</comment>
<comment type="subunit">
    <text evidence="1">Homodimer.</text>
</comment>
<comment type="subcellular location">
    <subcellularLocation>
        <location evidence="1">Cytoplasm</location>
    </subcellularLocation>
</comment>
<comment type="similarity">
    <text evidence="1">Belongs to the isocitrate and isopropylmalate dehydrogenases family. LeuB type 1 subfamily.</text>
</comment>
<evidence type="ECO:0000255" key="1">
    <source>
        <dbReference type="HAMAP-Rule" id="MF_01033"/>
    </source>
</evidence>
<reference key="1">
    <citation type="journal article" date="2005" name="Proc. Natl. Acad. Sci. U.S.A.">
        <title>The psychrophilic lifestyle as revealed by the genome sequence of Colwellia psychrerythraea 34H through genomic and proteomic analyses.</title>
        <authorList>
            <person name="Methe B.A."/>
            <person name="Nelson K.E."/>
            <person name="Deming J.W."/>
            <person name="Momen B."/>
            <person name="Melamud E."/>
            <person name="Zhang X."/>
            <person name="Moult J."/>
            <person name="Madupu R."/>
            <person name="Nelson W.C."/>
            <person name="Dodson R.J."/>
            <person name="Brinkac L.M."/>
            <person name="Daugherty S.C."/>
            <person name="Durkin A.S."/>
            <person name="DeBoy R.T."/>
            <person name="Kolonay J.F."/>
            <person name="Sullivan S.A."/>
            <person name="Zhou L."/>
            <person name="Davidsen T.M."/>
            <person name="Wu M."/>
            <person name="Huston A.L."/>
            <person name="Lewis M."/>
            <person name="Weaver B."/>
            <person name="Weidman J.F."/>
            <person name="Khouri H."/>
            <person name="Utterback T.R."/>
            <person name="Feldblyum T.V."/>
            <person name="Fraser C.M."/>
        </authorList>
    </citation>
    <scope>NUCLEOTIDE SEQUENCE [LARGE SCALE GENOMIC DNA]</scope>
    <source>
        <strain>34H / ATCC BAA-681</strain>
    </source>
</reference>
<organism>
    <name type="scientific">Colwellia psychrerythraea (strain 34H / ATCC BAA-681)</name>
    <name type="common">Vibrio psychroerythus</name>
    <dbReference type="NCBI Taxonomy" id="167879"/>
    <lineage>
        <taxon>Bacteria</taxon>
        <taxon>Pseudomonadati</taxon>
        <taxon>Pseudomonadota</taxon>
        <taxon>Gammaproteobacteria</taxon>
        <taxon>Alteromonadales</taxon>
        <taxon>Colwelliaceae</taxon>
        <taxon>Colwellia</taxon>
    </lineage>
</organism>
<keyword id="KW-0028">Amino-acid biosynthesis</keyword>
<keyword id="KW-0100">Branched-chain amino acid biosynthesis</keyword>
<keyword id="KW-0963">Cytoplasm</keyword>
<keyword id="KW-0432">Leucine biosynthesis</keyword>
<keyword id="KW-0460">Magnesium</keyword>
<keyword id="KW-0464">Manganese</keyword>
<keyword id="KW-0479">Metal-binding</keyword>
<keyword id="KW-0520">NAD</keyword>
<keyword id="KW-0560">Oxidoreductase</keyword>
<sequence>MSNIAILAGDGIGPEVMVEAKKVLNTVASKFDFEITTQDYDIGGAAIDNHGNALPDSTMAGCIESDAILFGSVGGPKWANLPPTEQPERCALLGLRSHFDLFCNMRPATLQPALSSLSTLRSDISEQGFDVLVIRELTGDIYFGEPKGRRGEGEEETGFDSMFYSRREVKRISHLAFQAAQKRNNKVTSVDKANVLATSQLWRQVVEEVAVEYPDVELEHLYVDNAAMQLVRDPNQFDVMLCPNLFGDILSDICAMITGSMGLLPSASLNSDGFGMYEPAGGSAPDIAGLGVANPIAQILSAALMLRYSLNQGAAAKAIEDAVSNALDNGVLTADLLPANERKNAKSTSEVGDYICKQIESA</sequence>
<name>LEU3_COLP3</name>
<protein>
    <recommendedName>
        <fullName evidence="1">3-isopropylmalate dehydrogenase</fullName>
        <ecNumber evidence="1">1.1.1.85</ecNumber>
    </recommendedName>
    <alternativeName>
        <fullName evidence="1">3-IPM-DH</fullName>
    </alternativeName>
    <alternativeName>
        <fullName evidence="1">Beta-IPM dehydrogenase</fullName>
        <shortName evidence="1">IMDH</shortName>
    </alternativeName>
</protein>
<proteinExistence type="inferred from homology"/>
<dbReference type="EC" id="1.1.1.85" evidence="1"/>
<dbReference type="EMBL" id="CP000083">
    <property type="protein sequence ID" value="AAZ27262.1"/>
    <property type="molecule type" value="Genomic_DNA"/>
</dbReference>
<dbReference type="RefSeq" id="WP_011044940.1">
    <property type="nucleotide sequence ID" value="NC_003910.7"/>
</dbReference>
<dbReference type="SMR" id="Q47WG3"/>
<dbReference type="STRING" id="167879.CPS_4209"/>
<dbReference type="KEGG" id="cps:CPS_4209"/>
<dbReference type="eggNOG" id="COG0473">
    <property type="taxonomic scope" value="Bacteria"/>
</dbReference>
<dbReference type="HOGENOM" id="CLU_031953_0_3_6"/>
<dbReference type="UniPathway" id="UPA00048">
    <property type="reaction ID" value="UER00072"/>
</dbReference>
<dbReference type="Proteomes" id="UP000000547">
    <property type="component" value="Chromosome"/>
</dbReference>
<dbReference type="GO" id="GO:0005829">
    <property type="term" value="C:cytosol"/>
    <property type="evidence" value="ECO:0007669"/>
    <property type="project" value="TreeGrafter"/>
</dbReference>
<dbReference type="GO" id="GO:0003862">
    <property type="term" value="F:3-isopropylmalate dehydrogenase activity"/>
    <property type="evidence" value="ECO:0007669"/>
    <property type="project" value="UniProtKB-UniRule"/>
</dbReference>
<dbReference type="GO" id="GO:0000287">
    <property type="term" value="F:magnesium ion binding"/>
    <property type="evidence" value="ECO:0007669"/>
    <property type="project" value="InterPro"/>
</dbReference>
<dbReference type="GO" id="GO:0051287">
    <property type="term" value="F:NAD binding"/>
    <property type="evidence" value="ECO:0007669"/>
    <property type="project" value="InterPro"/>
</dbReference>
<dbReference type="GO" id="GO:0009098">
    <property type="term" value="P:L-leucine biosynthetic process"/>
    <property type="evidence" value="ECO:0007669"/>
    <property type="project" value="UniProtKB-UniRule"/>
</dbReference>
<dbReference type="FunFam" id="3.40.718.10:FF:000006">
    <property type="entry name" value="3-isopropylmalate dehydrogenase"/>
    <property type="match status" value="1"/>
</dbReference>
<dbReference type="Gene3D" id="3.40.718.10">
    <property type="entry name" value="Isopropylmalate Dehydrogenase"/>
    <property type="match status" value="1"/>
</dbReference>
<dbReference type="HAMAP" id="MF_01033">
    <property type="entry name" value="LeuB_type1"/>
    <property type="match status" value="1"/>
</dbReference>
<dbReference type="InterPro" id="IPR019818">
    <property type="entry name" value="IsoCit/isopropylmalate_DH_CS"/>
</dbReference>
<dbReference type="InterPro" id="IPR024084">
    <property type="entry name" value="IsoPropMal-DH-like_dom"/>
</dbReference>
<dbReference type="InterPro" id="IPR004429">
    <property type="entry name" value="Isopropylmalate_DH"/>
</dbReference>
<dbReference type="NCBIfam" id="TIGR00169">
    <property type="entry name" value="leuB"/>
    <property type="match status" value="1"/>
</dbReference>
<dbReference type="PANTHER" id="PTHR42979">
    <property type="entry name" value="3-ISOPROPYLMALATE DEHYDROGENASE"/>
    <property type="match status" value="1"/>
</dbReference>
<dbReference type="PANTHER" id="PTHR42979:SF1">
    <property type="entry name" value="3-ISOPROPYLMALATE DEHYDROGENASE"/>
    <property type="match status" value="1"/>
</dbReference>
<dbReference type="Pfam" id="PF00180">
    <property type="entry name" value="Iso_dh"/>
    <property type="match status" value="1"/>
</dbReference>
<dbReference type="SMART" id="SM01329">
    <property type="entry name" value="Iso_dh"/>
    <property type="match status" value="1"/>
</dbReference>
<dbReference type="SUPFAM" id="SSF53659">
    <property type="entry name" value="Isocitrate/Isopropylmalate dehydrogenase-like"/>
    <property type="match status" value="1"/>
</dbReference>
<dbReference type="PROSITE" id="PS00470">
    <property type="entry name" value="IDH_IMDH"/>
    <property type="match status" value="1"/>
</dbReference>
<feature type="chain" id="PRO_0000083682" description="3-isopropylmalate dehydrogenase">
    <location>
        <begin position="1"/>
        <end position="362"/>
    </location>
</feature>
<feature type="binding site" evidence="1">
    <location>
        <begin position="75"/>
        <end position="88"/>
    </location>
    <ligand>
        <name>NAD(+)</name>
        <dbReference type="ChEBI" id="CHEBI:57540"/>
    </ligand>
</feature>
<feature type="binding site" evidence="1">
    <location>
        <position position="96"/>
    </location>
    <ligand>
        <name>substrate</name>
    </ligand>
</feature>
<feature type="binding site" evidence="1">
    <location>
        <position position="106"/>
    </location>
    <ligand>
        <name>substrate</name>
    </ligand>
</feature>
<feature type="binding site" evidence="1">
    <location>
        <position position="135"/>
    </location>
    <ligand>
        <name>substrate</name>
    </ligand>
</feature>
<feature type="binding site" evidence="1">
    <location>
        <position position="224"/>
    </location>
    <ligand>
        <name>Mg(2+)</name>
        <dbReference type="ChEBI" id="CHEBI:18420"/>
    </ligand>
</feature>
<feature type="binding site" evidence="1">
    <location>
        <position position="224"/>
    </location>
    <ligand>
        <name>substrate</name>
    </ligand>
</feature>
<feature type="binding site" evidence="1">
    <location>
        <position position="248"/>
    </location>
    <ligand>
        <name>Mg(2+)</name>
        <dbReference type="ChEBI" id="CHEBI:18420"/>
    </ligand>
</feature>
<feature type="binding site" evidence="1">
    <location>
        <position position="252"/>
    </location>
    <ligand>
        <name>Mg(2+)</name>
        <dbReference type="ChEBI" id="CHEBI:18420"/>
    </ligand>
</feature>
<feature type="binding site" evidence="1">
    <location>
        <begin position="282"/>
        <end position="294"/>
    </location>
    <ligand>
        <name>NAD(+)</name>
        <dbReference type="ChEBI" id="CHEBI:57540"/>
    </ligand>
</feature>
<feature type="site" description="Important for catalysis" evidence="1">
    <location>
        <position position="142"/>
    </location>
</feature>
<feature type="site" description="Important for catalysis" evidence="1">
    <location>
        <position position="192"/>
    </location>
</feature>
<gene>
    <name evidence="1" type="primary">leuB</name>
    <name type="ordered locus">CPS_4209</name>
</gene>